<gene>
    <name evidence="1" type="primary">patD</name>
    <name type="ordered locus">STY1467</name>
    <name type="ordered locus">t1506</name>
</gene>
<feature type="chain" id="PRO_0000269699" description="Gamma-aminobutyraldehyde dehydrogenase">
    <location>
        <begin position="1"/>
        <end position="474"/>
    </location>
</feature>
<feature type="active site" evidence="1">
    <location>
        <position position="246"/>
    </location>
</feature>
<feature type="active site" description="Nucleophile" evidence="1">
    <location>
        <position position="280"/>
    </location>
</feature>
<feature type="binding site" evidence="1">
    <location>
        <begin position="146"/>
        <end position="148"/>
    </location>
    <ligand>
        <name>NAD(+)</name>
        <dbReference type="ChEBI" id="CHEBI:57540"/>
    </ligand>
</feature>
<feature type="binding site" evidence="1">
    <location>
        <begin position="172"/>
        <end position="175"/>
    </location>
    <ligand>
        <name>NAD(+)</name>
        <dbReference type="ChEBI" id="CHEBI:57540"/>
    </ligand>
</feature>
<feature type="binding site" evidence="1">
    <location>
        <position position="209"/>
    </location>
    <ligand>
        <name>NAD(+)</name>
        <dbReference type="ChEBI" id="CHEBI:57540"/>
    </ligand>
</feature>
<feature type="binding site" evidence="1">
    <location>
        <begin position="225"/>
        <end position="228"/>
    </location>
    <ligand>
        <name>NAD(+)</name>
        <dbReference type="ChEBI" id="CHEBI:57540"/>
    </ligand>
</feature>
<feature type="binding site" evidence="1">
    <location>
        <position position="280"/>
    </location>
    <ligand>
        <name>NAD(+)</name>
        <dbReference type="ChEBI" id="CHEBI:57540"/>
    </ligand>
</feature>
<proteinExistence type="inferred from homology"/>
<protein>
    <recommendedName>
        <fullName evidence="1">Gamma-aminobutyraldehyde dehydrogenase</fullName>
        <shortName evidence="1">ABALDH</shortName>
        <ecNumber evidence="1">1.2.1.19</ecNumber>
    </recommendedName>
    <alternativeName>
        <fullName evidence="1">1-pyrroline dehydrogenase</fullName>
    </alternativeName>
    <alternativeName>
        <fullName evidence="1">4-aminobutanal dehydrogenase</fullName>
    </alternativeName>
    <alternativeName>
        <fullName evidence="1">5-aminopentanal dehydrogenase</fullName>
        <ecNumber evidence="1">1.2.1.-</ecNumber>
    </alternativeName>
</protein>
<name>ABDH_SALTI</name>
<accession>Q8Z747</accession>
<accession>Q7C9Q0</accession>
<dbReference type="EC" id="1.2.1.19" evidence="1"/>
<dbReference type="EC" id="1.2.1.-" evidence="1"/>
<dbReference type="EMBL" id="AL513382">
    <property type="protein sequence ID" value="CAD01728.1"/>
    <property type="status" value="ALT_INIT"/>
    <property type="molecule type" value="Genomic_DNA"/>
</dbReference>
<dbReference type="EMBL" id="AE014613">
    <property type="protein sequence ID" value="AAO69141.1"/>
    <property type="status" value="ALT_INIT"/>
    <property type="molecule type" value="Genomic_DNA"/>
</dbReference>
<dbReference type="RefSeq" id="NP_455900.3">
    <property type="nucleotide sequence ID" value="NC_003198.1"/>
</dbReference>
<dbReference type="SMR" id="Q8Z747"/>
<dbReference type="STRING" id="220341.gene:17585418"/>
<dbReference type="KEGG" id="stt:t1506"/>
<dbReference type="KEGG" id="sty:STY1467"/>
<dbReference type="PATRIC" id="fig|220341.7.peg.1477"/>
<dbReference type="eggNOG" id="COG1012">
    <property type="taxonomic scope" value="Bacteria"/>
</dbReference>
<dbReference type="HOGENOM" id="CLU_005391_0_2_6"/>
<dbReference type="OMA" id="VRHVMIK"/>
<dbReference type="UniPathway" id="UPA00188">
    <property type="reaction ID" value="UER00292"/>
</dbReference>
<dbReference type="Proteomes" id="UP000000541">
    <property type="component" value="Chromosome"/>
</dbReference>
<dbReference type="Proteomes" id="UP000002670">
    <property type="component" value="Chromosome"/>
</dbReference>
<dbReference type="GO" id="GO:0019145">
    <property type="term" value="F:aminobutyraldehyde dehydrogenase (NAD+) activity"/>
    <property type="evidence" value="ECO:0007669"/>
    <property type="project" value="UniProtKB-UniRule"/>
</dbReference>
<dbReference type="GO" id="GO:0051287">
    <property type="term" value="F:NAD binding"/>
    <property type="evidence" value="ECO:0007669"/>
    <property type="project" value="UniProtKB-UniRule"/>
</dbReference>
<dbReference type="GO" id="GO:0019477">
    <property type="term" value="P:L-lysine catabolic process"/>
    <property type="evidence" value="ECO:0007669"/>
    <property type="project" value="UniProtKB-UniRule"/>
</dbReference>
<dbReference type="GO" id="GO:0009447">
    <property type="term" value="P:putrescine catabolic process"/>
    <property type="evidence" value="ECO:0007669"/>
    <property type="project" value="UniProtKB-UniRule"/>
</dbReference>
<dbReference type="CDD" id="cd07092">
    <property type="entry name" value="ALDH_ABALDH-YdcW"/>
    <property type="match status" value="1"/>
</dbReference>
<dbReference type="FunFam" id="3.40.605.10:FF:000001">
    <property type="entry name" value="Aldehyde dehydrogenase 1"/>
    <property type="match status" value="1"/>
</dbReference>
<dbReference type="FunFam" id="3.40.309.10:FF:000010">
    <property type="entry name" value="Gamma-aminobutyraldehyde dehydrogenase"/>
    <property type="match status" value="1"/>
</dbReference>
<dbReference type="Gene3D" id="3.40.605.10">
    <property type="entry name" value="Aldehyde Dehydrogenase, Chain A, domain 1"/>
    <property type="match status" value="1"/>
</dbReference>
<dbReference type="Gene3D" id="3.40.309.10">
    <property type="entry name" value="Aldehyde Dehydrogenase, Chain A, domain 2"/>
    <property type="match status" value="1"/>
</dbReference>
<dbReference type="HAMAP" id="MF_01275">
    <property type="entry name" value="Aldedh_Prr"/>
    <property type="match status" value="1"/>
</dbReference>
<dbReference type="InterPro" id="IPR016161">
    <property type="entry name" value="Ald_DH/histidinol_DH"/>
</dbReference>
<dbReference type="InterPro" id="IPR016163">
    <property type="entry name" value="Ald_DH_C"/>
</dbReference>
<dbReference type="InterPro" id="IPR029510">
    <property type="entry name" value="Ald_DH_CS_GLU"/>
</dbReference>
<dbReference type="InterPro" id="IPR016162">
    <property type="entry name" value="Ald_DH_N"/>
</dbReference>
<dbReference type="InterPro" id="IPR015590">
    <property type="entry name" value="Aldehyde_DH_dom"/>
</dbReference>
<dbReference type="InterPro" id="IPR015657">
    <property type="entry name" value="Aminobutyraldehyde_DH"/>
</dbReference>
<dbReference type="InterPro" id="IPR017749">
    <property type="entry name" value="PatD"/>
</dbReference>
<dbReference type="NCBIfam" id="TIGR03374">
    <property type="entry name" value="ABALDH"/>
    <property type="match status" value="1"/>
</dbReference>
<dbReference type="NCBIfam" id="NF010000">
    <property type="entry name" value="PRK13473.1"/>
    <property type="match status" value="1"/>
</dbReference>
<dbReference type="PANTHER" id="PTHR11699">
    <property type="entry name" value="ALDEHYDE DEHYDROGENASE-RELATED"/>
    <property type="match status" value="1"/>
</dbReference>
<dbReference type="Pfam" id="PF00171">
    <property type="entry name" value="Aldedh"/>
    <property type="match status" value="1"/>
</dbReference>
<dbReference type="SUPFAM" id="SSF53720">
    <property type="entry name" value="ALDH-like"/>
    <property type="match status" value="1"/>
</dbReference>
<dbReference type="PROSITE" id="PS00687">
    <property type="entry name" value="ALDEHYDE_DEHYDR_GLU"/>
    <property type="match status" value="1"/>
</dbReference>
<evidence type="ECO:0000255" key="1">
    <source>
        <dbReference type="HAMAP-Rule" id="MF_01275"/>
    </source>
</evidence>
<evidence type="ECO:0000305" key="2"/>
<reference key="1">
    <citation type="journal article" date="2001" name="Nature">
        <title>Complete genome sequence of a multiple drug resistant Salmonella enterica serovar Typhi CT18.</title>
        <authorList>
            <person name="Parkhill J."/>
            <person name="Dougan G."/>
            <person name="James K.D."/>
            <person name="Thomson N.R."/>
            <person name="Pickard D."/>
            <person name="Wain J."/>
            <person name="Churcher C.M."/>
            <person name="Mungall K.L."/>
            <person name="Bentley S.D."/>
            <person name="Holden M.T.G."/>
            <person name="Sebaihia M."/>
            <person name="Baker S."/>
            <person name="Basham D."/>
            <person name="Brooks K."/>
            <person name="Chillingworth T."/>
            <person name="Connerton P."/>
            <person name="Cronin A."/>
            <person name="Davis P."/>
            <person name="Davies R.M."/>
            <person name="Dowd L."/>
            <person name="White N."/>
            <person name="Farrar J."/>
            <person name="Feltwell T."/>
            <person name="Hamlin N."/>
            <person name="Haque A."/>
            <person name="Hien T.T."/>
            <person name="Holroyd S."/>
            <person name="Jagels K."/>
            <person name="Krogh A."/>
            <person name="Larsen T.S."/>
            <person name="Leather S."/>
            <person name="Moule S."/>
            <person name="O'Gaora P."/>
            <person name="Parry C."/>
            <person name="Quail M.A."/>
            <person name="Rutherford K.M."/>
            <person name="Simmonds M."/>
            <person name="Skelton J."/>
            <person name="Stevens K."/>
            <person name="Whitehead S."/>
            <person name="Barrell B.G."/>
        </authorList>
    </citation>
    <scope>NUCLEOTIDE SEQUENCE [LARGE SCALE GENOMIC DNA]</scope>
    <source>
        <strain>CT18</strain>
    </source>
</reference>
<reference key="2">
    <citation type="journal article" date="2003" name="J. Bacteriol.">
        <title>Comparative genomics of Salmonella enterica serovar Typhi strains Ty2 and CT18.</title>
        <authorList>
            <person name="Deng W."/>
            <person name="Liou S.-R."/>
            <person name="Plunkett G. III"/>
            <person name="Mayhew G.F."/>
            <person name="Rose D.J."/>
            <person name="Burland V."/>
            <person name="Kodoyianni V."/>
            <person name="Schwartz D.C."/>
            <person name="Blattner F.R."/>
        </authorList>
    </citation>
    <scope>NUCLEOTIDE SEQUENCE [LARGE SCALE GENOMIC DNA]</scope>
    <source>
        <strain>ATCC 700931 / Ty2</strain>
    </source>
</reference>
<comment type="function">
    <text evidence="1">Catalyzes the oxidation 4-aminobutanal (gamma-aminobutyraldehyde) to 4-aminobutanoate (gamma-aminobutyrate or GABA). This is the second step in one of two pathways for putrescine degradation, where putrescine is converted into 4-aminobutanoate via 4-aminobutanal. Also functions as a 5-aminopentanal dehydrogenase in a a L-lysine degradation pathway to succinate that proceeds via cadaverine, glutarate and L-2-hydroxyglutarate.</text>
</comment>
<comment type="catalytic activity">
    <reaction evidence="1">
        <text>4-aminobutanal + NAD(+) + H2O = 4-aminobutanoate + NADH + 2 H(+)</text>
        <dbReference type="Rhea" id="RHEA:19105"/>
        <dbReference type="ChEBI" id="CHEBI:15377"/>
        <dbReference type="ChEBI" id="CHEBI:15378"/>
        <dbReference type="ChEBI" id="CHEBI:57540"/>
        <dbReference type="ChEBI" id="CHEBI:57945"/>
        <dbReference type="ChEBI" id="CHEBI:58264"/>
        <dbReference type="ChEBI" id="CHEBI:59888"/>
        <dbReference type="EC" id="1.2.1.19"/>
    </reaction>
    <physiologicalReaction direction="left-to-right" evidence="1">
        <dbReference type="Rhea" id="RHEA:19106"/>
    </physiologicalReaction>
</comment>
<comment type="catalytic activity">
    <reaction evidence="1">
        <text>5-aminopentanal + NAD(+) + H2O = 5-aminopentanoate + NADH + 2 H(+)</text>
        <dbReference type="Rhea" id="RHEA:61632"/>
        <dbReference type="ChEBI" id="CHEBI:15377"/>
        <dbReference type="ChEBI" id="CHEBI:15378"/>
        <dbReference type="ChEBI" id="CHEBI:57540"/>
        <dbReference type="ChEBI" id="CHEBI:57945"/>
        <dbReference type="ChEBI" id="CHEBI:144896"/>
        <dbReference type="ChEBI" id="CHEBI:356010"/>
    </reaction>
    <physiologicalReaction direction="left-to-right" evidence="1">
        <dbReference type="Rhea" id="RHEA:61633"/>
    </physiologicalReaction>
</comment>
<comment type="pathway">
    <text evidence="1">Amine and polyamine degradation; putrescine degradation; 4-aminobutanoate from 4-aminobutanal: step 1/1.</text>
</comment>
<comment type="pathway">
    <text evidence="1">Amino-acid degradation.</text>
</comment>
<comment type="subunit">
    <text evidence="1">Homotetramer.</text>
</comment>
<comment type="miscellaneous">
    <text evidence="1">4-aminobutanal can spontaneously cyclize to 1-pyrroline, and 5-aminopentanal to 1-piperideine.</text>
</comment>
<comment type="similarity">
    <text evidence="1">Belongs to the aldehyde dehydrogenase family. Gamma-aminobutyraldehyde dehydrogenase subfamily.</text>
</comment>
<comment type="sequence caution" evidence="2">
    <conflict type="erroneous initiation">
        <sequence resource="EMBL-CDS" id="AAO69141"/>
    </conflict>
</comment>
<comment type="sequence caution" evidence="2">
    <conflict type="erroneous initiation">
        <sequence resource="EMBL-CDS" id="CAD01728"/>
    </conflict>
</comment>
<keyword id="KW-0520">NAD</keyword>
<keyword id="KW-0560">Oxidoreductase</keyword>
<organism>
    <name type="scientific">Salmonella typhi</name>
    <dbReference type="NCBI Taxonomy" id="90370"/>
    <lineage>
        <taxon>Bacteria</taxon>
        <taxon>Pseudomonadati</taxon>
        <taxon>Pseudomonadota</taxon>
        <taxon>Gammaproteobacteria</taxon>
        <taxon>Enterobacterales</taxon>
        <taxon>Enterobacteriaceae</taxon>
        <taxon>Salmonella</taxon>
    </lineage>
</organism>
<sequence length="474" mass="51149">MQYQLLINGVLVDGEGERQSVYNPATGEVILEIAEASPVQVDAAVLAADSAFAEWGQTTPKARAECLLKLADSIEQNALEFARLESQNCGKPLHCVINDEIPAIVDVFRFFAGAARCLSGLAAGEYLEGHTSMIRRDPIGVVASIAPWNYPLMMAAWKLAPALAAGNCVVIKPSEITPLTALKLAALAKDIFPPGVLNVLFGRGQTVGDVLTGHEKVRMVSLTGSIATGEHILRHTAPAIKRTHMELGGKAPVIVFDDADLDAVAQGVRTFGFYNAGQDCTAACRIYAQRGIYDALVEKLGNAVSSLKMGAPEDKSTELGPLSSLAHLKRVTAAVEEAKALSHIRVITGGSQTEGKGYYFAPTLLADAKQEDAIVQREVFGPVVSITVFDDEDQVLRWANDSRYGLASSVWTQDVGRAHRLSARLQYGCTWINTHFMLVSEMPHGGQKQSGYGKDMSLYGLEDYTLVRHIMVKH</sequence>